<keyword id="KW-0966">Cell projection</keyword>
<keyword id="KW-0157">Chromophore</keyword>
<keyword id="KW-1015">Disulfide bond</keyword>
<keyword id="KW-0297">G-protein coupled receptor</keyword>
<keyword id="KW-0325">Glycoprotein</keyword>
<keyword id="KW-0449">Lipoprotein</keyword>
<keyword id="KW-0472">Membrane</keyword>
<keyword id="KW-0564">Palmitate</keyword>
<keyword id="KW-0597">Phosphoprotein</keyword>
<keyword id="KW-0600">Photoreceptor protein</keyword>
<keyword id="KW-0675">Receptor</keyword>
<keyword id="KW-0681">Retinal protein</keyword>
<keyword id="KW-0716">Sensory transduction</keyword>
<keyword id="KW-0807">Transducer</keyword>
<keyword id="KW-0812">Transmembrane</keyword>
<keyword id="KW-1133">Transmembrane helix</keyword>
<keyword id="KW-0844">Vision</keyword>
<gene>
    <name type="primary">rho</name>
</gene>
<comment type="function">
    <text evidence="1 2 3">Photoreceptor required for image-forming vision at low light intensity. While most salt water fish species use retinal as chromophore, most freshwater fish use 3-dehydroretinal, or a mixture of retinal and 3-dehydroretinal (By similarity). Light-induced isomerization of 11-cis to all-trans retinal triggers a conformational change that activates signaling via G-proteins. Subsequent receptor phosphorylation mediates displacement of the bound G-protein alpha subunit by arrestin and terminates signaling (By similarity).</text>
</comment>
<comment type="subcellular location">
    <subcellularLocation>
        <location evidence="2">Membrane</location>
        <topology evidence="2">Multi-pass membrane protein</topology>
    </subcellularLocation>
    <subcellularLocation>
        <location evidence="4">Cell projection</location>
        <location evidence="4">Cilium</location>
        <location evidence="4">Photoreceptor outer segment</location>
    </subcellularLocation>
    <text evidence="2">Synthesized in the inner segment (IS) of rod photoreceptor cells before vectorial transport to disk membranes in the rod outer segment (OS) photosensory cilia.</text>
</comment>
<comment type="PTM">
    <text evidence="1">Phosphorylated on some or all of the serine and threonine residues present in the C-terminal region.</text>
</comment>
<comment type="PTM">
    <text evidence="1">Contains one covalently linked retinal chromophore.</text>
</comment>
<comment type="similarity">
    <text evidence="6">Belongs to the G-protein coupled receptor 1 family. Opsin subfamily.</text>
</comment>
<organism>
    <name type="scientific">Cottinella boulengeri</name>
    <name type="common">Short-headed sculpin</name>
    <name type="synonym">Abyssocottus boulengeri</name>
    <dbReference type="NCBI Taxonomy" id="61639"/>
    <lineage>
        <taxon>Eukaryota</taxon>
        <taxon>Metazoa</taxon>
        <taxon>Chordata</taxon>
        <taxon>Craniata</taxon>
        <taxon>Vertebrata</taxon>
        <taxon>Euteleostomi</taxon>
        <taxon>Actinopterygii</taxon>
        <taxon>Neopterygii</taxon>
        <taxon>Teleostei</taxon>
        <taxon>Neoteleostei</taxon>
        <taxon>Acanthomorphata</taxon>
        <taxon>Eupercaria</taxon>
        <taxon>Perciformes</taxon>
        <taxon>Cottioidei</taxon>
        <taxon>Cottales</taxon>
        <taxon>Cottidae</taxon>
        <taxon>Cottinella</taxon>
    </lineage>
</organism>
<dbReference type="EMBL" id="U97273">
    <property type="protein sequence ID" value="AAB61727.1"/>
    <property type="molecule type" value="Genomic_DNA"/>
</dbReference>
<dbReference type="SMR" id="O42307"/>
<dbReference type="GlyCosmos" id="O42307">
    <property type="glycosylation" value="1 site, No reported glycans"/>
</dbReference>
<dbReference type="GO" id="GO:0016020">
    <property type="term" value="C:membrane"/>
    <property type="evidence" value="ECO:0000250"/>
    <property type="project" value="UniProtKB"/>
</dbReference>
<dbReference type="GO" id="GO:0097381">
    <property type="term" value="C:photoreceptor disc membrane"/>
    <property type="evidence" value="ECO:0000250"/>
    <property type="project" value="UniProtKB"/>
</dbReference>
<dbReference type="GO" id="GO:0005886">
    <property type="term" value="C:plasma membrane"/>
    <property type="evidence" value="ECO:0000250"/>
    <property type="project" value="UniProtKB"/>
</dbReference>
<dbReference type="GO" id="GO:0005502">
    <property type="term" value="F:11-cis retinal binding"/>
    <property type="evidence" value="ECO:0000250"/>
    <property type="project" value="UniProtKB"/>
</dbReference>
<dbReference type="GO" id="GO:0008020">
    <property type="term" value="F:G protein-coupled photoreceptor activity"/>
    <property type="evidence" value="ECO:0000250"/>
    <property type="project" value="UniProtKB"/>
</dbReference>
<dbReference type="GO" id="GO:0016038">
    <property type="term" value="P:absorption of visible light"/>
    <property type="evidence" value="ECO:0000250"/>
    <property type="project" value="UniProtKB"/>
</dbReference>
<dbReference type="GO" id="GO:0016056">
    <property type="term" value="P:G protein-coupled opsin signaling pathway"/>
    <property type="evidence" value="ECO:0000250"/>
    <property type="project" value="UniProtKB"/>
</dbReference>
<dbReference type="GO" id="GO:0007601">
    <property type="term" value="P:visual perception"/>
    <property type="evidence" value="ECO:0007669"/>
    <property type="project" value="UniProtKB-KW"/>
</dbReference>
<dbReference type="CDD" id="cd15080">
    <property type="entry name" value="7tmA_MWS_opsin"/>
    <property type="match status" value="1"/>
</dbReference>
<dbReference type="FunFam" id="1.20.1070.10:FF:000357">
    <property type="entry name" value="Rhodopsin"/>
    <property type="match status" value="1"/>
</dbReference>
<dbReference type="Gene3D" id="1.20.1070.10">
    <property type="entry name" value="Rhodopsin 7-helix transmembrane proteins"/>
    <property type="match status" value="1"/>
</dbReference>
<dbReference type="InterPro" id="IPR050125">
    <property type="entry name" value="GPCR_opsins"/>
</dbReference>
<dbReference type="InterPro" id="IPR000276">
    <property type="entry name" value="GPCR_Rhodpsn"/>
</dbReference>
<dbReference type="InterPro" id="IPR017452">
    <property type="entry name" value="GPCR_Rhodpsn_7TM"/>
</dbReference>
<dbReference type="InterPro" id="IPR001760">
    <property type="entry name" value="Opsin"/>
</dbReference>
<dbReference type="InterPro" id="IPR027430">
    <property type="entry name" value="Retinal_BS"/>
</dbReference>
<dbReference type="InterPro" id="IPR000732">
    <property type="entry name" value="Rhodopsin"/>
</dbReference>
<dbReference type="PANTHER" id="PTHR24240">
    <property type="entry name" value="OPSIN"/>
    <property type="match status" value="1"/>
</dbReference>
<dbReference type="Pfam" id="PF00001">
    <property type="entry name" value="7tm_1"/>
    <property type="match status" value="1"/>
</dbReference>
<dbReference type="PRINTS" id="PR00237">
    <property type="entry name" value="GPCRRHODOPSN"/>
</dbReference>
<dbReference type="PRINTS" id="PR00238">
    <property type="entry name" value="OPSIN"/>
</dbReference>
<dbReference type="PRINTS" id="PR00579">
    <property type="entry name" value="RHODOPSIN"/>
</dbReference>
<dbReference type="SUPFAM" id="SSF81321">
    <property type="entry name" value="Family A G protein-coupled receptor-like"/>
    <property type="match status" value="1"/>
</dbReference>
<dbReference type="PROSITE" id="PS00237">
    <property type="entry name" value="G_PROTEIN_RECEP_F1_1"/>
    <property type="match status" value="1"/>
</dbReference>
<dbReference type="PROSITE" id="PS50262">
    <property type="entry name" value="G_PROTEIN_RECEP_F1_2"/>
    <property type="match status" value="1"/>
</dbReference>
<dbReference type="PROSITE" id="PS00238">
    <property type="entry name" value="OPSIN"/>
    <property type="match status" value="1"/>
</dbReference>
<feature type="chain" id="PRO_0000197663" description="Rhodopsin">
    <location>
        <begin position="1" status="less than"/>
        <end position="289" status="greater than"/>
    </location>
</feature>
<feature type="topological domain" description="Extracellular" evidence="7">
    <location>
        <begin position="1" status="less than"/>
        <end position="7"/>
    </location>
</feature>
<feature type="transmembrane region" description="Helical; Name=1" evidence="1">
    <location>
        <begin position="8"/>
        <end position="32"/>
    </location>
</feature>
<feature type="topological domain" description="Cytoplasmic" evidence="7">
    <location>
        <begin position="33"/>
        <end position="44"/>
    </location>
</feature>
<feature type="transmembrane region" description="Helical; Name=2" evidence="1">
    <location>
        <begin position="45"/>
        <end position="67"/>
    </location>
</feature>
<feature type="topological domain" description="Extracellular" evidence="7">
    <location>
        <begin position="68"/>
        <end position="81"/>
    </location>
</feature>
<feature type="transmembrane region" description="Helical; Name=3" evidence="1">
    <location>
        <begin position="82"/>
        <end position="104"/>
    </location>
</feature>
<feature type="topological domain" description="Cytoplasmic" evidence="7">
    <location>
        <begin position="105"/>
        <end position="123"/>
    </location>
</feature>
<feature type="transmembrane region" description="Helical; Name=4" evidence="1">
    <location>
        <begin position="124"/>
        <end position="144"/>
    </location>
</feature>
<feature type="topological domain" description="Extracellular" evidence="7">
    <location>
        <begin position="145"/>
        <end position="173"/>
    </location>
</feature>
<feature type="transmembrane region" description="Helical; Name=5" evidence="1">
    <location>
        <begin position="174"/>
        <end position="195"/>
    </location>
</feature>
<feature type="topological domain" description="Cytoplasmic" evidence="7">
    <location>
        <begin position="196"/>
        <end position="223"/>
    </location>
</feature>
<feature type="transmembrane region" description="Helical; Name=6" evidence="1">
    <location>
        <begin position="224"/>
        <end position="245"/>
    </location>
</feature>
<feature type="topological domain" description="Extracellular" evidence="7">
    <location>
        <begin position="246"/>
        <end position="257"/>
    </location>
</feature>
<feature type="transmembrane region" description="Helical; Name=7" evidence="1">
    <location>
        <begin position="258"/>
        <end position="279"/>
    </location>
</feature>
<feature type="topological domain" description="Cytoplasmic" evidence="7">
    <location>
        <begin position="280"/>
        <end position="289" status="greater than"/>
    </location>
</feature>
<feature type="short sequence motif" description="'Ionic lock' involved in activated form stabilization" evidence="1">
    <location>
        <begin position="105"/>
        <end position="107"/>
    </location>
</feature>
<feature type="site" description="Plays an important role in the conformation switch to the active conformation" evidence="1">
    <location>
        <position position="84"/>
    </location>
</feature>
<feature type="modified residue" description="N6-(retinylidene)lysine" evidence="1">
    <location>
        <position position="267"/>
    </location>
</feature>
<feature type="glycosylation site" description="N-linked (GlcNAc...) asparagine" evidence="5">
    <location>
        <position position="171"/>
    </location>
</feature>
<feature type="disulfide bond" evidence="6">
    <location>
        <begin position="81"/>
        <end position="158"/>
    </location>
</feature>
<feature type="non-terminal residue">
    <location>
        <position position="1"/>
    </location>
</feature>
<feature type="non-terminal residue">
    <location>
        <position position="289"/>
    </location>
</feature>
<proteinExistence type="inferred from homology"/>
<accession>O42307</accession>
<name>OPSD_COTBO</name>
<evidence type="ECO:0000250" key="1">
    <source>
        <dbReference type="UniProtKB" id="P02699"/>
    </source>
</evidence>
<evidence type="ECO:0000250" key="2">
    <source>
        <dbReference type="UniProtKB" id="P08100"/>
    </source>
</evidence>
<evidence type="ECO:0000250" key="3">
    <source>
        <dbReference type="UniProtKB" id="P32309"/>
    </source>
</evidence>
<evidence type="ECO:0000250" key="4">
    <source>
        <dbReference type="UniProtKB" id="P35359"/>
    </source>
</evidence>
<evidence type="ECO:0000255" key="5"/>
<evidence type="ECO:0000255" key="6">
    <source>
        <dbReference type="PROSITE-ProRule" id="PRU00521"/>
    </source>
</evidence>
<evidence type="ECO:0000305" key="7"/>
<protein>
    <recommendedName>
        <fullName>Rhodopsin</fullName>
    </recommendedName>
</protein>
<sequence length="289" mass="32753">YLVNPAAYAALGAYMFLLILIGFPINFLTLYVTLEHKKLRTPLNYILLNLAVGNLFMVLGGFTTTMYTSMHGYFVLGRLGCNLEGFFATLGGEIALWSLVVLAIERWIVVCKPISKFRFTEDHAIMGLAFSWVMGLACAVPPLVGWSRYIPEGMKCSCGVDYYTRAEGFNNESFVIYMFIVHFLIPLSVIFFCYGRLLCAVKEAAAAQQESETTQRAEKEVSRMVVIMVIGFLVCWLPYASVAWWIFCNQGSDFGPIFMTLPSFFAKRPAIYNPMIYICMNKQFRHCMI</sequence>
<reference key="1">
    <citation type="journal article" date="1997" name="Mol. Phylogenet. Evol.">
        <title>Molecular evolution of the cottoid fish endemic to Lake Baikal deduced from nuclear DNA evidence.</title>
        <authorList>
            <person name="Hunt D.M."/>
            <person name="Fitzgibbon J."/>
            <person name="Slobodyanyuk S.J."/>
            <person name="Bowmaker J.K."/>
            <person name="Dulai K.S."/>
        </authorList>
    </citation>
    <scope>NUCLEOTIDE SEQUENCE [GENOMIC DNA]</scope>
</reference>